<feature type="signal peptide" evidence="2">
    <location>
        <begin position="1"/>
        <end position="27"/>
    </location>
</feature>
<feature type="chain" id="PRO_5000576211" description="Thiosulfate dehydrogenase">
    <location>
        <begin position="28"/>
        <end position="270"/>
    </location>
</feature>
<feature type="domain" description="Cytochrome c 1" evidence="1">
    <location>
        <begin position="44"/>
        <end position="158"/>
    </location>
</feature>
<feature type="domain" description="Cytochrome c 2" evidence="1">
    <location>
        <begin position="174"/>
        <end position="260"/>
    </location>
</feature>
<feature type="binding site" description="covalent" evidence="1">
    <location>
        <position position="76"/>
    </location>
    <ligand>
        <name>heme c</name>
        <dbReference type="ChEBI" id="CHEBI:61717"/>
        <label>1</label>
    </ligand>
</feature>
<feature type="binding site" description="covalent" evidence="1">
    <location>
        <position position="79"/>
    </location>
    <ligand>
        <name>heme c</name>
        <dbReference type="ChEBI" id="CHEBI:61717"/>
        <label>1</label>
    </ligand>
</feature>
<feature type="binding site" description="axial binding residue" evidence="1">
    <location>
        <position position="80"/>
    </location>
    <ligand>
        <name>heme c</name>
        <dbReference type="ChEBI" id="CHEBI:61717"/>
        <label>1</label>
    </ligand>
    <ligandPart>
        <name>Fe</name>
        <dbReference type="ChEBI" id="CHEBI:18248"/>
    </ligandPart>
</feature>
<feature type="binding site" description="covalent" evidence="1">
    <location>
        <position position="187"/>
    </location>
    <ligand>
        <name>heme c</name>
        <dbReference type="ChEBI" id="CHEBI:61717"/>
        <label>2</label>
    </ligand>
</feature>
<feature type="binding site" description="covalent" evidence="1">
    <location>
        <position position="190"/>
    </location>
    <ligand>
        <name>heme c</name>
        <dbReference type="ChEBI" id="CHEBI:61717"/>
        <label>2</label>
    </ligand>
</feature>
<feature type="binding site" description="axial binding residue" evidence="1">
    <location>
        <position position="191"/>
    </location>
    <ligand>
        <name>heme c</name>
        <dbReference type="ChEBI" id="CHEBI:61717"/>
        <label>2</label>
    </ligand>
    <ligandPart>
        <name>Fe</name>
        <dbReference type="ChEBI" id="CHEBI:18248"/>
    </ligandPart>
</feature>
<feature type="mutagenesis site" description="Loss of function." evidence="3">
    <original>C</original>
    <variation>G</variation>
    <location>
        <position position="123"/>
    </location>
</feature>
<feature type="sequence conflict" description="In Ref. 2; AA sequence." evidence="4" ref="2">
    <original>E</original>
    <variation>G</variation>
    <location>
        <position position="50"/>
    </location>
</feature>
<feature type="sequence conflict" description="In Ref. 2; AA sequence." evidence="4" ref="2">
    <location>
        <position position="56"/>
    </location>
</feature>
<feature type="sequence conflict" description="In Ref. 2; AA sequence." evidence="4" ref="2">
    <original>P</original>
    <variation>PR</variation>
    <location>
        <position position="67"/>
    </location>
</feature>
<feature type="helix" evidence="5">
    <location>
        <begin position="40"/>
        <end position="42"/>
    </location>
</feature>
<feature type="helix" evidence="5">
    <location>
        <begin position="46"/>
        <end position="60"/>
    </location>
</feature>
<feature type="helix" evidence="5">
    <location>
        <begin position="62"/>
        <end position="65"/>
    </location>
</feature>
<feature type="turn" evidence="5">
    <location>
        <begin position="67"/>
        <end position="69"/>
    </location>
</feature>
<feature type="helix" evidence="5">
    <location>
        <begin position="76"/>
        <end position="78"/>
    </location>
</feature>
<feature type="helix" evidence="5">
    <location>
        <begin position="99"/>
        <end position="102"/>
    </location>
</feature>
<feature type="strand" evidence="5">
    <location>
        <begin position="104"/>
        <end position="107"/>
    </location>
</feature>
<feature type="turn" evidence="5">
    <location>
        <begin position="108"/>
        <end position="111"/>
    </location>
</feature>
<feature type="strand" evidence="5">
    <location>
        <begin position="112"/>
        <end position="114"/>
    </location>
</feature>
<feature type="helix" evidence="5">
    <location>
        <begin position="116"/>
        <end position="125"/>
    </location>
</feature>
<feature type="turn" evidence="5">
    <location>
        <begin position="126"/>
        <end position="128"/>
    </location>
</feature>
<feature type="helix" evidence="5">
    <location>
        <begin position="138"/>
        <end position="150"/>
    </location>
</feature>
<feature type="turn" evidence="5">
    <location>
        <begin position="151"/>
        <end position="153"/>
    </location>
</feature>
<feature type="helix" evidence="5">
    <location>
        <begin position="176"/>
        <end position="186"/>
    </location>
</feature>
<feature type="helix" evidence="5">
    <location>
        <begin position="188"/>
        <end position="191"/>
    </location>
</feature>
<feature type="strand" evidence="5">
    <location>
        <begin position="203"/>
        <end position="207"/>
    </location>
</feature>
<feature type="strand" evidence="5">
    <location>
        <begin position="210"/>
        <end position="212"/>
    </location>
</feature>
<feature type="helix" evidence="5">
    <location>
        <begin position="221"/>
        <end position="223"/>
    </location>
</feature>
<feature type="helix" evidence="5">
    <location>
        <begin position="225"/>
        <end position="235"/>
    </location>
</feature>
<feature type="helix" evidence="5">
    <location>
        <begin position="246"/>
        <end position="257"/>
    </location>
</feature>
<reference key="1">
    <citation type="journal article" date="2011" name="Stand. Genomic Sci.">
        <title>Complete genome sequence of Allochromatium vinosum DSM 180(T).</title>
        <authorList>
            <person name="Weissgerber T."/>
            <person name="Zigann R."/>
            <person name="Bruce D."/>
            <person name="Chang Y.J."/>
            <person name="Detter J.C."/>
            <person name="Han C."/>
            <person name="Hauser L."/>
            <person name="Jeffries C.D."/>
            <person name="Land M."/>
            <person name="Munk A.C."/>
            <person name="Tapia R."/>
            <person name="Dahl C."/>
        </authorList>
    </citation>
    <scope>NUCLEOTIDE SEQUENCE [LARGE SCALE GENOMIC DNA]</scope>
    <source>
        <strain>ATCC 17899 / DSM 180 / NBRC 103801 / NCIMB 10441 / D</strain>
    </source>
</reference>
<reference key="2">
    <citation type="journal article" date="2006" name="Mol. Microbiol.">
        <title>Thiosulphate oxidation in the phototrophic sulphur bacterium Allochromatium vinosum.</title>
        <authorList>
            <person name="Hensen D."/>
            <person name="Sperling D."/>
            <person name="Trueper H.G."/>
            <person name="Brune D.C."/>
            <person name="Dahl C."/>
        </authorList>
    </citation>
    <scope>PROTEIN SEQUENCE OF 28-72</scope>
    <scope>FUNCTION</scope>
    <scope>SUBCELLULAR LOCATION</scope>
    <scope>CATALYTIC ACTIVITY</scope>
    <scope>BIOPHYSICOCHEMICAL PROPERTIES</scope>
    <scope>SUBUNIT</scope>
    <source>
        <strain>ATCC 17899 / DSM 180 / NBRC 103801 / NCIMB 10441 / D</strain>
    </source>
</reference>
<reference key="3">
    <citation type="journal article" date="2012" name="Environ. Microbiol.">
        <title>Thiosulfate dehydrogenase: a widespread unusual acidophilic c-type cytochrome.</title>
        <authorList>
            <person name="Denkmann K."/>
            <person name="Grein F."/>
            <person name="Zigann R."/>
            <person name="Siemen A."/>
            <person name="Bergmann J."/>
            <person name="van Helmont S."/>
            <person name="Nicolai A."/>
            <person name="Pereira I.A."/>
            <person name="Dahl C."/>
        </authorList>
    </citation>
    <scope>FUNCTION</scope>
    <scope>CATALYTIC ACTIVITY</scope>
    <scope>BIOPHYSICOCHEMICAL PROPERTIES</scope>
    <scope>SUBUNIT</scope>
    <scope>DISRUPTION PHENOTYPE</scope>
    <scope>MUTAGENESIS OF CYS-123</scope>
    <source>
        <strain>ATCC 17899 / DSM 180 / NBRC 103801 / NCIMB 10441 / D</strain>
    </source>
</reference>
<reference key="4">
    <citation type="journal article" date="2014" name="PLoS ONE">
        <title>Finding sequences for over 270 orphan enzymes.</title>
        <authorList>
            <person name="Shearer A.G."/>
            <person name="Altman T."/>
            <person name="Rhee C.D."/>
        </authorList>
    </citation>
    <scope>IDENTIFICATION</scope>
</reference>
<proteinExistence type="evidence at protein level"/>
<accession>D3RVD4</accession>
<dbReference type="EC" id="1.8.2.2"/>
<dbReference type="EMBL" id="CP001896">
    <property type="protein sequence ID" value="ADC61061.1"/>
    <property type="molecule type" value="Genomic_DNA"/>
</dbReference>
<dbReference type="PDB" id="4V2K">
    <property type="method" value="X-ray"/>
    <property type="resolution" value="1.29 A"/>
    <property type="chains" value="A=28-270"/>
</dbReference>
<dbReference type="PDB" id="4WQ7">
    <property type="method" value="X-ray"/>
    <property type="resolution" value="1.98 A"/>
    <property type="chains" value="A=29-270"/>
</dbReference>
<dbReference type="PDB" id="4WQ8">
    <property type="method" value="X-ray"/>
    <property type="resolution" value="1.40 A"/>
    <property type="chains" value="A=29-270"/>
</dbReference>
<dbReference type="PDB" id="4WQ9">
    <property type="method" value="X-ray"/>
    <property type="resolution" value="1.47 A"/>
    <property type="chains" value="A=29-270"/>
</dbReference>
<dbReference type="PDB" id="4WQA">
    <property type="method" value="X-ray"/>
    <property type="resolution" value="1.64 A"/>
    <property type="chains" value="A=29-270"/>
</dbReference>
<dbReference type="PDB" id="4WQB">
    <property type="method" value="X-ray"/>
    <property type="resolution" value="1.50 A"/>
    <property type="chains" value="A=29-270"/>
</dbReference>
<dbReference type="PDB" id="4WQC">
    <property type="method" value="X-ray"/>
    <property type="resolution" value="1.56 A"/>
    <property type="chains" value="A=29-270"/>
</dbReference>
<dbReference type="PDB" id="4WQD">
    <property type="method" value="X-ray"/>
    <property type="resolution" value="1.22 A"/>
    <property type="chains" value="A=29-270"/>
</dbReference>
<dbReference type="PDB" id="4WQE">
    <property type="method" value="X-ray"/>
    <property type="resolution" value="1.40 A"/>
    <property type="chains" value="A=29-270"/>
</dbReference>
<dbReference type="PDBsum" id="4V2K"/>
<dbReference type="PDBsum" id="4WQ7"/>
<dbReference type="PDBsum" id="4WQ8"/>
<dbReference type="PDBsum" id="4WQ9"/>
<dbReference type="PDBsum" id="4WQA"/>
<dbReference type="PDBsum" id="4WQB"/>
<dbReference type="PDBsum" id="4WQC"/>
<dbReference type="PDBsum" id="4WQD"/>
<dbReference type="PDBsum" id="4WQE"/>
<dbReference type="SMR" id="D3RVD4"/>
<dbReference type="STRING" id="572477.Alvin_0091"/>
<dbReference type="KEGG" id="alv:Alvin_0091"/>
<dbReference type="eggNOG" id="COG3258">
    <property type="taxonomic scope" value="Bacteria"/>
</dbReference>
<dbReference type="HOGENOM" id="CLU_058582_2_0_6"/>
<dbReference type="OrthoDB" id="9779283at2"/>
<dbReference type="BioCyc" id="MetaCyc:MONOMER-13248"/>
<dbReference type="BRENDA" id="1.8.2.2">
    <property type="organism ID" value="257"/>
</dbReference>
<dbReference type="SABIO-RK" id="D3RVD4"/>
<dbReference type="EvolutionaryTrace" id="D3RVD4"/>
<dbReference type="Proteomes" id="UP000001441">
    <property type="component" value="Chromosome"/>
</dbReference>
<dbReference type="GO" id="GO:0042597">
    <property type="term" value="C:periplasmic space"/>
    <property type="evidence" value="ECO:0000314"/>
    <property type="project" value="UniProtKB"/>
</dbReference>
<dbReference type="GO" id="GO:0009055">
    <property type="term" value="F:electron transfer activity"/>
    <property type="evidence" value="ECO:0000315"/>
    <property type="project" value="CACAO"/>
</dbReference>
<dbReference type="GO" id="GO:0020037">
    <property type="term" value="F:heme binding"/>
    <property type="evidence" value="ECO:0007669"/>
    <property type="project" value="InterPro"/>
</dbReference>
<dbReference type="GO" id="GO:0046872">
    <property type="term" value="F:metal ion binding"/>
    <property type="evidence" value="ECO:0007669"/>
    <property type="project" value="UniProtKB-KW"/>
</dbReference>
<dbReference type="GO" id="GO:0050338">
    <property type="term" value="F:thiosulfate dehydrogenase activity"/>
    <property type="evidence" value="ECO:0000314"/>
    <property type="project" value="UniProtKB"/>
</dbReference>
<dbReference type="FunFam" id="1.10.760.10:FF:000036">
    <property type="entry name" value="Thiosulfate dehydrogenase"/>
    <property type="match status" value="1"/>
</dbReference>
<dbReference type="FunFam" id="1.10.760.10:FF:000039">
    <property type="entry name" value="Thiosulfate dehydrogenase"/>
    <property type="match status" value="1"/>
</dbReference>
<dbReference type="Gene3D" id="1.10.760.10">
    <property type="entry name" value="Cytochrome c-like domain"/>
    <property type="match status" value="2"/>
</dbReference>
<dbReference type="InterPro" id="IPR009056">
    <property type="entry name" value="Cyt_c-like_dom"/>
</dbReference>
<dbReference type="InterPro" id="IPR036909">
    <property type="entry name" value="Cyt_c-like_dom_sf"/>
</dbReference>
<dbReference type="InterPro" id="IPR051459">
    <property type="entry name" value="Cytochrome_c-type_DH"/>
</dbReference>
<dbReference type="PANTHER" id="PTHR35008">
    <property type="entry name" value="BLL4482 PROTEIN-RELATED"/>
    <property type="match status" value="1"/>
</dbReference>
<dbReference type="PANTHER" id="PTHR35008:SF9">
    <property type="entry name" value="CYTOCHROME C DOMAIN-CONTAINING PROTEIN"/>
    <property type="match status" value="1"/>
</dbReference>
<dbReference type="Pfam" id="PF13442">
    <property type="entry name" value="Cytochrome_CBB3"/>
    <property type="match status" value="1"/>
</dbReference>
<dbReference type="Pfam" id="PF21342">
    <property type="entry name" value="SoxA-TsdA_cyt-c"/>
    <property type="match status" value="1"/>
</dbReference>
<dbReference type="SUPFAM" id="SSF46626">
    <property type="entry name" value="Cytochrome c"/>
    <property type="match status" value="2"/>
</dbReference>
<dbReference type="PROSITE" id="PS51007">
    <property type="entry name" value="CYTC"/>
    <property type="match status" value="1"/>
</dbReference>
<organism>
    <name type="scientific">Allochromatium vinosum (strain ATCC 17899 / DSM 180 / NBRC 103801 / NCIMB 10441 / D)</name>
    <name type="common">Chromatium vinosum</name>
    <dbReference type="NCBI Taxonomy" id="572477"/>
    <lineage>
        <taxon>Bacteria</taxon>
        <taxon>Pseudomonadati</taxon>
        <taxon>Pseudomonadota</taxon>
        <taxon>Gammaproteobacteria</taxon>
        <taxon>Chromatiales</taxon>
        <taxon>Chromatiaceae</taxon>
        <taxon>Allochromatium</taxon>
    </lineage>
</organism>
<protein>
    <recommendedName>
        <fullName>Thiosulfate dehydrogenase</fullName>
        <ecNumber>1.8.2.2</ecNumber>
    </recommendedName>
    <alternativeName>
        <fullName>Tetrathionate synthase</fullName>
    </alternativeName>
</protein>
<sequence>MRGDVRVHTASPIAAAWLLAVGLVAHAEEPPTVALTVPAAALLPDGALGESIVRGRRYLSDTPAQLPDFVGNGLACRHCHPGRDGEVGTEANAAPFVGVVGRFPQYSARHGRLITLEQRIGDCFERSLNGRALALDHPALIDMLAYMSWLSQGVPVGAVVAGHGIPTLTLEREPDGVHGEALYQARCLACHGADGSGTLDADGRYLFPPLWGPRSFNTGAGMNRQATAAGFIKHKMPLGADDSLSDEEAWDVAGFVLTHPRPLFQEPTGD</sequence>
<keyword id="KW-0002">3D-structure</keyword>
<keyword id="KW-0903">Direct protein sequencing</keyword>
<keyword id="KW-0349">Heme</keyword>
<keyword id="KW-0408">Iron</keyword>
<keyword id="KW-0479">Metal-binding</keyword>
<keyword id="KW-0560">Oxidoreductase</keyword>
<keyword id="KW-0574">Periplasm</keyword>
<keyword id="KW-1185">Reference proteome</keyword>
<keyword id="KW-0677">Repeat</keyword>
<keyword id="KW-0732">Signal</keyword>
<name>TSDA_ALLVD</name>
<comment type="function">
    <text evidence="2 3">Catalyzes the oxidation of 2 molecules of thiosulfate to tetrathionate.</text>
</comment>
<comment type="catalytic activity">
    <reaction evidence="2 3">
        <text>2 thiosulfate + 2 Fe(III)-[cytochrome c] = tetrathionate + 2 Fe(II)-[cytochrome c] + 2 H(+)</text>
        <dbReference type="Rhea" id="RHEA:20549"/>
        <dbReference type="Rhea" id="RHEA-COMP:10350"/>
        <dbReference type="Rhea" id="RHEA-COMP:14399"/>
        <dbReference type="ChEBI" id="CHEBI:15226"/>
        <dbReference type="ChEBI" id="CHEBI:15378"/>
        <dbReference type="ChEBI" id="CHEBI:29033"/>
        <dbReference type="ChEBI" id="CHEBI:29034"/>
        <dbReference type="ChEBI" id="CHEBI:33542"/>
        <dbReference type="EC" id="1.8.2.2"/>
    </reaction>
</comment>
<comment type="biophysicochemical properties">
    <kinetics>
        <Vmax evidence="2 3">30000.0 umol/min/mg enzyme (with 1 mM ferricyanide)</Vmax>
    </kinetics>
    <phDependence>
        <text evidence="2 3">Optimum pH is 4.2.</text>
    </phDependence>
</comment>
<comment type="subunit">
    <text evidence="2 3">Monomer.</text>
</comment>
<comment type="subcellular location">
    <subcellularLocation>
        <location evidence="2">Periplasm</location>
    </subcellularLocation>
</comment>
<comment type="PTM">
    <text evidence="3">Binds 2 heme c groups covalently per subunit.</text>
</comment>
<comment type="disruption phenotype">
    <text evidence="3">Cells are unable to produce tetrathionate from thiosulfate.</text>
</comment>
<evidence type="ECO:0000255" key="1">
    <source>
        <dbReference type="PROSITE-ProRule" id="PRU00433"/>
    </source>
</evidence>
<evidence type="ECO:0000269" key="2">
    <source>
    </source>
</evidence>
<evidence type="ECO:0000269" key="3">
    <source>
    </source>
</evidence>
<evidence type="ECO:0000305" key="4"/>
<evidence type="ECO:0007829" key="5">
    <source>
        <dbReference type="PDB" id="4V2K"/>
    </source>
</evidence>
<gene>
    <name type="primary">tsdA</name>
    <name type="ordered locus">Alvin_0091</name>
</gene>